<reference key="1">
    <citation type="journal article" date="2006" name="Theor. Appl. Genet.">
        <title>Complete chloroplast genome sequences of Solanum bulbocastanum, Solanum lycopersicum and comparative analyses with other Solanaceae genomes.</title>
        <authorList>
            <person name="Daniell H."/>
            <person name="Lee S.-B."/>
            <person name="Grevich J."/>
            <person name="Saski C."/>
            <person name="Quesada-Vargas T."/>
            <person name="Guda C."/>
            <person name="Tomkins J."/>
            <person name="Jansen R.K."/>
        </authorList>
    </citation>
    <scope>NUCLEOTIDE SEQUENCE [LARGE SCALE GENOMIC DNA]</scope>
    <source>
        <strain>cv. PT29</strain>
    </source>
</reference>
<comment type="function">
    <text evidence="2">Photosystem II (PSII) is a light-driven water:plastoquinone oxidoreductase that uses light energy to abstract electrons from H(2)O, generating O(2) and a proton gradient subsequently used for ATP formation. It consists of a core antenna complex that captures photons, and an electron transfer chain that converts photonic excitation into a charge separation. The D1/D2 (PsbA/PsbD) reaction center heterodimer binds P680, the primary electron donor of PSII as well as several subsequent electron acceptors. D2 is needed for assembly of a stable PSII complex.</text>
</comment>
<comment type="catalytic activity">
    <reaction evidence="2">
        <text>2 a plastoquinone + 4 hnu + 2 H2O = 2 a plastoquinol + O2</text>
        <dbReference type="Rhea" id="RHEA:36359"/>
        <dbReference type="Rhea" id="RHEA-COMP:9561"/>
        <dbReference type="Rhea" id="RHEA-COMP:9562"/>
        <dbReference type="ChEBI" id="CHEBI:15377"/>
        <dbReference type="ChEBI" id="CHEBI:15379"/>
        <dbReference type="ChEBI" id="CHEBI:17757"/>
        <dbReference type="ChEBI" id="CHEBI:30212"/>
        <dbReference type="ChEBI" id="CHEBI:62192"/>
        <dbReference type="EC" id="1.10.3.9"/>
    </reaction>
</comment>
<comment type="cofactor">
    <text evidence="2">The D1/D2 heterodimer binds P680, chlorophylls that are the primary electron donor of PSII, and subsequent electron acceptors. It shares a non-heme iron and each subunit binds pheophytin, quinone, additional chlorophylls, carotenoids and lipids. There is also a Cl(-1) ion associated with D1 and D2, which is required for oxygen evolution. The PSII complex binds additional chlorophylls, carotenoids and specific lipids.</text>
</comment>
<comment type="subunit">
    <text evidence="2">PSII is composed of 1 copy each of membrane proteins PsbA, PsbB, PsbC, PsbD, PsbE, PsbF, PsbH, PsbI, PsbJ, PsbK, PsbL, PsbM, PsbT, PsbX, PsbY, PsbZ, Psb30/Ycf12, at least 3 peripheral proteins of the oxygen-evolving complex and a large number of cofactors. It forms dimeric complexes.</text>
</comment>
<comment type="subcellular location">
    <subcellularLocation>
        <location evidence="2">Plastid</location>
        <location evidence="2">Chloroplast thylakoid membrane</location>
        <topology evidence="2">Multi-pass membrane protein</topology>
    </subcellularLocation>
</comment>
<comment type="miscellaneous">
    <text evidence="2">2 of the reaction center chlorophylls (ChlD1 and ChlD2) are entirely coordinated by water.</text>
</comment>
<comment type="similarity">
    <text evidence="2">Belongs to the reaction center PufL/M/PsbA/D family.</text>
</comment>
<dbReference type="EC" id="1.10.3.9" evidence="2"/>
<dbReference type="EMBL" id="DQ347958">
    <property type="protein sequence ID" value="ABC56208.1"/>
    <property type="molecule type" value="Genomic_DNA"/>
</dbReference>
<dbReference type="RefSeq" id="YP_538843.1">
    <property type="nucleotide sequence ID" value="NC_007943.1"/>
</dbReference>
<dbReference type="SMR" id="Q2MIJ2"/>
<dbReference type="GeneID" id="3989528"/>
<dbReference type="GO" id="GO:0009535">
    <property type="term" value="C:chloroplast thylakoid membrane"/>
    <property type="evidence" value="ECO:0007669"/>
    <property type="project" value="UniProtKB-SubCell"/>
</dbReference>
<dbReference type="GO" id="GO:0009523">
    <property type="term" value="C:photosystem II"/>
    <property type="evidence" value="ECO:0007669"/>
    <property type="project" value="UniProtKB-KW"/>
</dbReference>
<dbReference type="GO" id="GO:0016168">
    <property type="term" value="F:chlorophyll binding"/>
    <property type="evidence" value="ECO:0007669"/>
    <property type="project" value="UniProtKB-UniRule"/>
</dbReference>
<dbReference type="GO" id="GO:0045156">
    <property type="term" value="F:electron transporter, transferring electrons within the cyclic electron transport pathway of photosynthesis activity"/>
    <property type="evidence" value="ECO:0007669"/>
    <property type="project" value="InterPro"/>
</dbReference>
<dbReference type="GO" id="GO:0005506">
    <property type="term" value="F:iron ion binding"/>
    <property type="evidence" value="ECO:0007669"/>
    <property type="project" value="UniProtKB-UniRule"/>
</dbReference>
<dbReference type="GO" id="GO:0010242">
    <property type="term" value="F:oxygen evolving activity"/>
    <property type="evidence" value="ECO:0007669"/>
    <property type="project" value="UniProtKB-EC"/>
</dbReference>
<dbReference type="GO" id="GO:0009772">
    <property type="term" value="P:photosynthetic electron transport in photosystem II"/>
    <property type="evidence" value="ECO:0007669"/>
    <property type="project" value="InterPro"/>
</dbReference>
<dbReference type="CDD" id="cd09288">
    <property type="entry name" value="Photosystem-II_D2"/>
    <property type="match status" value="1"/>
</dbReference>
<dbReference type="FunFam" id="1.20.85.10:FF:000001">
    <property type="entry name" value="photosystem II D2 protein-like"/>
    <property type="match status" value="1"/>
</dbReference>
<dbReference type="Gene3D" id="1.20.85.10">
    <property type="entry name" value="Photosystem II protein D1-like"/>
    <property type="match status" value="1"/>
</dbReference>
<dbReference type="HAMAP" id="MF_01383">
    <property type="entry name" value="PSII_PsbD_D2"/>
    <property type="match status" value="1"/>
</dbReference>
<dbReference type="InterPro" id="IPR055266">
    <property type="entry name" value="D1/D2"/>
</dbReference>
<dbReference type="InterPro" id="IPR036854">
    <property type="entry name" value="Photo_II_D1/D2_sf"/>
</dbReference>
<dbReference type="InterPro" id="IPR000484">
    <property type="entry name" value="Photo_RC_L/M"/>
</dbReference>
<dbReference type="InterPro" id="IPR055265">
    <property type="entry name" value="Photo_RC_L/M_CS"/>
</dbReference>
<dbReference type="InterPro" id="IPR005868">
    <property type="entry name" value="PSII_PsbD/D2"/>
</dbReference>
<dbReference type="NCBIfam" id="TIGR01152">
    <property type="entry name" value="psbD"/>
    <property type="match status" value="1"/>
</dbReference>
<dbReference type="PANTHER" id="PTHR33149:SF12">
    <property type="entry name" value="PHOTOSYSTEM II D2 PROTEIN"/>
    <property type="match status" value="1"/>
</dbReference>
<dbReference type="PANTHER" id="PTHR33149">
    <property type="entry name" value="PHOTOSYSTEM II PROTEIN D1"/>
    <property type="match status" value="1"/>
</dbReference>
<dbReference type="Pfam" id="PF00124">
    <property type="entry name" value="Photo_RC"/>
    <property type="match status" value="1"/>
</dbReference>
<dbReference type="PRINTS" id="PR00256">
    <property type="entry name" value="REACTNCENTRE"/>
</dbReference>
<dbReference type="SUPFAM" id="SSF81483">
    <property type="entry name" value="Bacterial photosystem II reaction centre, L and M subunits"/>
    <property type="match status" value="1"/>
</dbReference>
<dbReference type="PROSITE" id="PS00244">
    <property type="entry name" value="REACTION_CENTER"/>
    <property type="match status" value="1"/>
</dbReference>
<geneLocation type="chloroplast"/>
<organism>
    <name type="scientific">Solanum bulbocastanum</name>
    <name type="common">Wild potato</name>
    <dbReference type="NCBI Taxonomy" id="147425"/>
    <lineage>
        <taxon>Eukaryota</taxon>
        <taxon>Viridiplantae</taxon>
        <taxon>Streptophyta</taxon>
        <taxon>Embryophyta</taxon>
        <taxon>Tracheophyta</taxon>
        <taxon>Spermatophyta</taxon>
        <taxon>Magnoliopsida</taxon>
        <taxon>eudicotyledons</taxon>
        <taxon>Gunneridae</taxon>
        <taxon>Pentapetalae</taxon>
        <taxon>asterids</taxon>
        <taxon>lamiids</taxon>
        <taxon>Solanales</taxon>
        <taxon>Solanaceae</taxon>
        <taxon>Solanoideae</taxon>
        <taxon>Solaneae</taxon>
        <taxon>Solanum</taxon>
    </lineage>
</organism>
<gene>
    <name evidence="2" type="primary">psbD</name>
</gene>
<proteinExistence type="inferred from homology"/>
<feature type="initiator methionine" description="Removed" evidence="1">
    <location>
        <position position="1"/>
    </location>
</feature>
<feature type="chain" id="PRO_0000359695" description="Photosystem II D2 protein">
    <location>
        <begin position="2"/>
        <end position="353"/>
    </location>
</feature>
<feature type="transmembrane region" description="Helical" evidence="2">
    <location>
        <begin position="41"/>
        <end position="61"/>
    </location>
</feature>
<feature type="transmembrane region" description="Helical" evidence="2">
    <location>
        <begin position="125"/>
        <end position="141"/>
    </location>
</feature>
<feature type="transmembrane region" description="Helical" evidence="2">
    <location>
        <begin position="153"/>
        <end position="166"/>
    </location>
</feature>
<feature type="transmembrane region" description="Helical" evidence="2">
    <location>
        <begin position="208"/>
        <end position="228"/>
    </location>
</feature>
<feature type="transmembrane region" description="Helical" evidence="2">
    <location>
        <begin position="279"/>
        <end position="295"/>
    </location>
</feature>
<feature type="binding site" description="axial binding residue" evidence="2">
    <location>
        <position position="118"/>
    </location>
    <ligand>
        <name>chlorophyll a</name>
        <dbReference type="ChEBI" id="CHEBI:58416"/>
        <label>ChlzD2</label>
    </ligand>
    <ligandPart>
        <name>Mg</name>
        <dbReference type="ChEBI" id="CHEBI:25107"/>
    </ligandPart>
</feature>
<feature type="binding site" evidence="2">
    <location>
        <position position="130"/>
    </location>
    <ligand>
        <name>pheophytin a</name>
        <dbReference type="ChEBI" id="CHEBI:136840"/>
        <label>D2</label>
    </ligand>
</feature>
<feature type="binding site" evidence="2">
    <location>
        <position position="143"/>
    </location>
    <ligand>
        <name>pheophytin a</name>
        <dbReference type="ChEBI" id="CHEBI:136840"/>
        <label>D2</label>
    </ligand>
</feature>
<feature type="binding site" description="axial binding residue" evidence="2">
    <location>
        <position position="198"/>
    </location>
    <ligand>
        <name>chlorophyll a</name>
        <dbReference type="ChEBI" id="CHEBI:58416"/>
        <label>PD2</label>
    </ligand>
    <ligandPart>
        <name>Mg</name>
        <dbReference type="ChEBI" id="CHEBI:25107"/>
    </ligandPart>
</feature>
<feature type="binding site" evidence="2">
    <location>
        <position position="215"/>
    </location>
    <ligand>
        <name>a plastoquinone</name>
        <dbReference type="ChEBI" id="CHEBI:17757"/>
        <label>Q(A)</label>
    </ligand>
</feature>
<feature type="binding site" evidence="2">
    <location>
        <position position="215"/>
    </location>
    <ligand>
        <name>Fe cation</name>
        <dbReference type="ChEBI" id="CHEBI:24875"/>
        <note>ligand shared with heterodimeric partner</note>
    </ligand>
</feature>
<feature type="binding site" evidence="2">
    <location>
        <position position="262"/>
    </location>
    <ligand>
        <name>a plastoquinone</name>
        <dbReference type="ChEBI" id="CHEBI:17757"/>
        <label>Q(A)</label>
    </ligand>
</feature>
<feature type="binding site" evidence="2">
    <location>
        <position position="269"/>
    </location>
    <ligand>
        <name>Fe cation</name>
        <dbReference type="ChEBI" id="CHEBI:24875"/>
        <note>ligand shared with heterodimeric partner</note>
    </ligand>
</feature>
<feature type="modified residue" description="N-acetylthreonine" evidence="1">
    <location>
        <position position="2"/>
    </location>
</feature>
<feature type="modified residue" description="Phosphothreonine" evidence="1">
    <location>
        <position position="2"/>
    </location>
</feature>
<sequence length="353" mass="39535">MTIAIGKFTKDENDLFDIMDDWLRRDRFVFVGWSGLLLFPCAYFAVGGWFTGTTFVTSWYTHGLASSYLEGCNFLTAAVSTPANSLAHSLLLLWGPEAQGDFTRWCQLGGLWTFVALHGAFGLIGFMLRQFELARSVQLRPYNAIAFSGPIAVFVSVFLIYPLGQSGWFFAPSFGVAAIFRFILFFQGFHNWTLNPFHMMGVAGVLGAALLCAIHGATVENTLFEDGDGANTFRAFNPTQAEETYSMVTANRFWSQIFGVAFSNKRWLHFFMLFVPVTGLWMSALGVVGLALNLRAYDFVSQEIRAAEDPEFETFYTKNILLNEGIRAWMAAQDQPHENLIFPEEVLPRGNAL</sequence>
<name>PSBD_SOLBU</name>
<keyword id="KW-0007">Acetylation</keyword>
<keyword id="KW-0148">Chlorophyll</keyword>
<keyword id="KW-0150">Chloroplast</keyword>
<keyword id="KW-0157">Chromophore</keyword>
<keyword id="KW-0249">Electron transport</keyword>
<keyword id="KW-0408">Iron</keyword>
<keyword id="KW-0460">Magnesium</keyword>
<keyword id="KW-0472">Membrane</keyword>
<keyword id="KW-0479">Metal-binding</keyword>
<keyword id="KW-0560">Oxidoreductase</keyword>
<keyword id="KW-0597">Phosphoprotein</keyword>
<keyword id="KW-0602">Photosynthesis</keyword>
<keyword id="KW-0604">Photosystem II</keyword>
<keyword id="KW-0934">Plastid</keyword>
<keyword id="KW-0793">Thylakoid</keyword>
<keyword id="KW-0812">Transmembrane</keyword>
<keyword id="KW-1133">Transmembrane helix</keyword>
<keyword id="KW-0813">Transport</keyword>
<evidence type="ECO:0000250" key="1">
    <source>
        <dbReference type="UniProtKB" id="P56761"/>
    </source>
</evidence>
<evidence type="ECO:0000255" key="2">
    <source>
        <dbReference type="HAMAP-Rule" id="MF_01383"/>
    </source>
</evidence>
<protein>
    <recommendedName>
        <fullName evidence="2">Photosystem II D2 protein</fullName>
        <shortName evidence="2">PSII D2 protein</shortName>
        <ecNumber evidence="2">1.10.3.9</ecNumber>
    </recommendedName>
    <alternativeName>
        <fullName evidence="2">Photosystem Q(A) protein</fullName>
    </alternativeName>
</protein>
<accession>Q2MIJ2</accession>